<reference key="1">
    <citation type="journal article" date="1987" name="Gene">
        <title>Cloning and nucleotide sequence of different iso-IS231 elements and their structural association with the Tn4430 transposon in Bacillus thuringiensis.</title>
        <authorList>
            <person name="Mahillon J."/>
            <person name="Seurinck J."/>
            <person name="Delcour J."/>
            <person name="Zabeau M."/>
        </authorList>
    </citation>
    <scope>NUCLEOTIDE SEQUENCE [GENOMIC DNA]</scope>
    <source>
        <strain>1715</strain>
    </source>
</reference>
<feature type="chain" id="PRO_0000173306" description="Transposase for insertion sequence element IS231B">
    <location>
        <begin position="1"/>
        <end position="478"/>
    </location>
</feature>
<sequence>MNLSIQDELQLFSEELCRHLTPSFLEELAKKLGFVKRKRKFSGSELATIFIWISQRTASDSLVRLCSQLHAATGTLMSPEGLNKRFDKKAVEFLKYIFSTLWKSKLCKTSAISSTALTHFQRIRILDATIFQIPKHLASIYPGSGGCAQTAGIKIQLEYDLHSGQFLNFQVGPGKNNDKTFGTECLDTLRPGDLCIRDLGYFSLEDLDQMDQRGAYYISRLKLNHTVYIKNPSPEYFRNGTVKKQSQYIQVDLEHIMNHLKPGQTYEIKEAYIGKNQKLFTRVIIYRLTEKQIQERRKKQAYTESKKGITFSEKSKRLTGINIYVSNTPEGIVPMEQIHDFYSLRWQIEIIFKTWKSLFQIHHWQNIKQERLECHVYGRLIAIFICSSTMFKMRKLLLQKNKRELSEYKAIGMIQDHVSLLYQAIQRNTQDLTKILIRLFDLLQKNGRKSHRYERKTIFDIMGVVYEYNGFGKQKKAA</sequence>
<protein>
    <recommendedName>
        <fullName>Transposase for insertion sequence element IS231B</fullName>
    </recommendedName>
</protein>
<organism>
    <name type="scientific">Bacillus thuringiensis subsp. berliner</name>
    <dbReference type="NCBI Taxonomy" id="1434"/>
    <lineage>
        <taxon>Bacteria</taxon>
        <taxon>Bacillati</taxon>
        <taxon>Bacillota</taxon>
        <taxon>Bacilli</taxon>
        <taxon>Bacillales</taxon>
        <taxon>Bacillaceae</taxon>
        <taxon>Bacillus</taxon>
        <taxon>Bacillus cereus group</taxon>
    </lineage>
</organism>
<evidence type="ECO:0000305" key="1"/>
<comment type="function">
    <text>Involved in the transposition of the insertion sequence.</text>
</comment>
<comment type="similarity">
    <text evidence="1">Belongs to the transposase 11 family.</text>
</comment>
<dbReference type="EMBL" id="M16158">
    <property type="protein sequence ID" value="AAA83517.1"/>
    <property type="status" value="ALT_SEQ"/>
    <property type="molecule type" value="Genomic_DNA"/>
</dbReference>
<dbReference type="PIR" id="B29051">
    <property type="entry name" value="B29051"/>
</dbReference>
<dbReference type="GO" id="GO:0003677">
    <property type="term" value="F:DNA binding"/>
    <property type="evidence" value="ECO:0007669"/>
    <property type="project" value="UniProtKB-KW"/>
</dbReference>
<dbReference type="GO" id="GO:0004803">
    <property type="term" value="F:transposase activity"/>
    <property type="evidence" value="ECO:0007669"/>
    <property type="project" value="InterPro"/>
</dbReference>
<dbReference type="GO" id="GO:0006313">
    <property type="term" value="P:DNA transposition"/>
    <property type="evidence" value="ECO:0007669"/>
    <property type="project" value="InterPro"/>
</dbReference>
<dbReference type="Gene3D" id="3.90.350.10">
    <property type="entry name" value="Transposase Inhibitor Protein From Tn5, Chain A, domain 1"/>
    <property type="match status" value="1"/>
</dbReference>
<dbReference type="InterPro" id="IPR012337">
    <property type="entry name" value="RNaseH-like_sf"/>
</dbReference>
<dbReference type="InterPro" id="IPR047952">
    <property type="entry name" value="Transpos_IS4"/>
</dbReference>
<dbReference type="InterPro" id="IPR002559">
    <property type="entry name" value="Transposase_11"/>
</dbReference>
<dbReference type="NCBIfam" id="NF033592">
    <property type="entry name" value="transpos_IS4_1"/>
    <property type="match status" value="1"/>
</dbReference>
<dbReference type="PANTHER" id="PTHR33258">
    <property type="entry name" value="TRANSPOSASE INSL FOR INSERTION SEQUENCE ELEMENT IS186A-RELATED"/>
    <property type="match status" value="1"/>
</dbReference>
<dbReference type="PANTHER" id="PTHR33258:SF1">
    <property type="entry name" value="TRANSPOSASE INSL FOR INSERTION SEQUENCE ELEMENT IS186A-RELATED"/>
    <property type="match status" value="1"/>
</dbReference>
<dbReference type="Pfam" id="PF01609">
    <property type="entry name" value="DDE_Tnp_1"/>
    <property type="match status" value="1"/>
</dbReference>
<dbReference type="SUPFAM" id="SSF53098">
    <property type="entry name" value="Ribonuclease H-like"/>
    <property type="match status" value="1"/>
</dbReference>
<proteinExistence type="inferred from homology"/>
<keyword id="KW-0233">DNA recombination</keyword>
<keyword id="KW-0238">DNA-binding</keyword>
<keyword id="KW-0814">Transposable element</keyword>
<keyword id="KW-0815">Transposition</keyword>
<name>T231B_BACTB</name>
<accession>P12248</accession>